<comment type="function">
    <text evidence="1">Involved in the cleavage of the C1-C2 bond of 3D-(3,5/4)-trihydroxycyclohexane-1,2-dione (THcHDO) to yield 5-deoxy-glucuronate (5DG).</text>
</comment>
<comment type="catalytic activity">
    <reaction evidence="1">
        <text>3D-3,5/4-trihydroxycyclohexane-1,2-dione + H2O = 5-deoxy-D-glucuronate + H(+)</text>
        <dbReference type="Rhea" id="RHEA:25836"/>
        <dbReference type="ChEBI" id="CHEBI:15377"/>
        <dbReference type="ChEBI" id="CHEBI:15378"/>
        <dbReference type="ChEBI" id="CHEBI:28446"/>
        <dbReference type="ChEBI" id="CHEBI:58852"/>
        <dbReference type="EC" id="3.7.1.22"/>
    </reaction>
</comment>
<comment type="cofactor">
    <cofactor evidence="1">
        <name>Mg(2+)</name>
        <dbReference type="ChEBI" id="CHEBI:18420"/>
    </cofactor>
    <text evidence="1">Binds 1 Mg(2+) ion per subunit.</text>
</comment>
<comment type="cofactor">
    <cofactor evidence="1">
        <name>thiamine diphosphate</name>
        <dbReference type="ChEBI" id="CHEBI:58937"/>
    </cofactor>
    <text evidence="1">Binds 1 thiamine pyrophosphate per subunit.</text>
</comment>
<comment type="pathway">
    <text evidence="1">Polyol metabolism; myo-inositol degradation into acetyl-CoA; acetyl-CoA from myo-inositol: step 3/7.</text>
</comment>
<comment type="similarity">
    <text evidence="1">Belongs to the TPP enzyme family.</text>
</comment>
<evidence type="ECO:0000255" key="1">
    <source>
        <dbReference type="HAMAP-Rule" id="MF_01669"/>
    </source>
</evidence>
<proteinExistence type="inferred from homology"/>
<reference key="1">
    <citation type="journal article" date="2002" name="Proc. Natl. Acad. Sci. U.S.A.">
        <title>Complete genome sequence of Clostridium perfringens, an anaerobic flesh-eater.</title>
        <authorList>
            <person name="Shimizu T."/>
            <person name="Ohtani K."/>
            <person name="Hirakawa H."/>
            <person name="Ohshima K."/>
            <person name="Yamashita A."/>
            <person name="Shiba T."/>
            <person name="Ogasawara N."/>
            <person name="Hattori M."/>
            <person name="Kuhara S."/>
            <person name="Hayashi H."/>
        </authorList>
    </citation>
    <scope>NUCLEOTIDE SEQUENCE [LARGE SCALE GENOMIC DNA]</scope>
    <source>
        <strain>13 / Type A</strain>
    </source>
</reference>
<feature type="chain" id="PRO_0000352539" description="3D-(3,5/4)-trihydroxycyclohexane-1,2-dione hydrolase">
    <location>
        <begin position="1"/>
        <end position="639"/>
    </location>
</feature>
<feature type="region of interest" description="Thiamine pyrophosphate binding" evidence="1">
    <location>
        <begin position="438"/>
        <end position="518"/>
    </location>
</feature>
<feature type="binding site" evidence="1">
    <location>
        <position position="62"/>
    </location>
    <ligand>
        <name>thiamine diphosphate</name>
        <dbReference type="ChEBI" id="CHEBI:58937"/>
    </ligand>
</feature>
<feature type="binding site" evidence="1">
    <location>
        <position position="489"/>
    </location>
    <ligand>
        <name>Mg(2+)</name>
        <dbReference type="ChEBI" id="CHEBI:18420"/>
    </ligand>
</feature>
<feature type="binding site" evidence="1">
    <location>
        <position position="516"/>
    </location>
    <ligand>
        <name>Mg(2+)</name>
        <dbReference type="ChEBI" id="CHEBI:18420"/>
    </ligand>
</feature>
<gene>
    <name evidence="1" type="primary">iolD</name>
    <name type="ordered locus">CPE0089</name>
</gene>
<accession>Q8XP76</accession>
<dbReference type="EC" id="3.7.1.22" evidence="1"/>
<dbReference type="EMBL" id="BA000016">
    <property type="protein sequence ID" value="BAB79795.1"/>
    <property type="molecule type" value="Genomic_DNA"/>
</dbReference>
<dbReference type="RefSeq" id="WP_003470047.1">
    <property type="nucleotide sequence ID" value="NC_003366.1"/>
</dbReference>
<dbReference type="SMR" id="Q8XP76"/>
<dbReference type="STRING" id="195102.gene:10489333"/>
<dbReference type="KEGG" id="cpe:CPE0089"/>
<dbReference type="HOGENOM" id="CLU_013748_6_0_9"/>
<dbReference type="UniPathway" id="UPA00076">
    <property type="reaction ID" value="UER00145"/>
</dbReference>
<dbReference type="Proteomes" id="UP000000818">
    <property type="component" value="Chromosome"/>
</dbReference>
<dbReference type="GO" id="GO:0005948">
    <property type="term" value="C:acetolactate synthase complex"/>
    <property type="evidence" value="ECO:0007669"/>
    <property type="project" value="TreeGrafter"/>
</dbReference>
<dbReference type="GO" id="GO:0102481">
    <property type="term" value="F:3D-(3,5/4)-trihydroxycyclohexane-1,2-dione hydrolase activity"/>
    <property type="evidence" value="ECO:0007669"/>
    <property type="project" value="UniProtKB-EC"/>
</dbReference>
<dbReference type="GO" id="GO:0003984">
    <property type="term" value="F:acetolactate synthase activity"/>
    <property type="evidence" value="ECO:0007669"/>
    <property type="project" value="TreeGrafter"/>
</dbReference>
<dbReference type="GO" id="GO:0050660">
    <property type="term" value="F:flavin adenine dinucleotide binding"/>
    <property type="evidence" value="ECO:0007669"/>
    <property type="project" value="TreeGrafter"/>
</dbReference>
<dbReference type="GO" id="GO:0000287">
    <property type="term" value="F:magnesium ion binding"/>
    <property type="evidence" value="ECO:0007669"/>
    <property type="project" value="UniProtKB-UniRule"/>
</dbReference>
<dbReference type="GO" id="GO:0030976">
    <property type="term" value="F:thiamine pyrophosphate binding"/>
    <property type="evidence" value="ECO:0007669"/>
    <property type="project" value="UniProtKB-UniRule"/>
</dbReference>
<dbReference type="GO" id="GO:0019310">
    <property type="term" value="P:inositol catabolic process"/>
    <property type="evidence" value="ECO:0007669"/>
    <property type="project" value="UniProtKB-UniRule"/>
</dbReference>
<dbReference type="GO" id="GO:0009097">
    <property type="term" value="P:isoleucine biosynthetic process"/>
    <property type="evidence" value="ECO:0007669"/>
    <property type="project" value="TreeGrafter"/>
</dbReference>
<dbReference type="GO" id="GO:0009099">
    <property type="term" value="P:L-valine biosynthetic process"/>
    <property type="evidence" value="ECO:0007669"/>
    <property type="project" value="TreeGrafter"/>
</dbReference>
<dbReference type="CDD" id="cd02003">
    <property type="entry name" value="TPP_IolD"/>
    <property type="match status" value="1"/>
</dbReference>
<dbReference type="CDD" id="cd07035">
    <property type="entry name" value="TPP_PYR_POX_like"/>
    <property type="match status" value="1"/>
</dbReference>
<dbReference type="Gene3D" id="3.40.50.970">
    <property type="match status" value="2"/>
</dbReference>
<dbReference type="Gene3D" id="3.40.50.1220">
    <property type="entry name" value="TPP-binding domain"/>
    <property type="match status" value="1"/>
</dbReference>
<dbReference type="HAMAP" id="MF_01669">
    <property type="entry name" value="IolD"/>
    <property type="match status" value="1"/>
</dbReference>
<dbReference type="InterPro" id="IPR029035">
    <property type="entry name" value="DHS-like_NAD/FAD-binding_dom"/>
</dbReference>
<dbReference type="InterPro" id="IPR030817">
    <property type="entry name" value="Myo_inos_IolD"/>
</dbReference>
<dbReference type="InterPro" id="IPR023757">
    <property type="entry name" value="THcHDO_hydrolase_firmi"/>
</dbReference>
<dbReference type="InterPro" id="IPR029061">
    <property type="entry name" value="THDP-binding"/>
</dbReference>
<dbReference type="InterPro" id="IPR012000">
    <property type="entry name" value="Thiamin_PyroP_enz_cen_dom"/>
</dbReference>
<dbReference type="InterPro" id="IPR012001">
    <property type="entry name" value="Thiamin_PyroP_enz_TPP-bd_dom"/>
</dbReference>
<dbReference type="InterPro" id="IPR000399">
    <property type="entry name" value="TPP-bd_CS"/>
</dbReference>
<dbReference type="InterPro" id="IPR045229">
    <property type="entry name" value="TPP_enz"/>
</dbReference>
<dbReference type="InterPro" id="IPR011766">
    <property type="entry name" value="TPP_enzyme_TPP-bd"/>
</dbReference>
<dbReference type="NCBIfam" id="TIGR04377">
    <property type="entry name" value="myo_inos_iolD"/>
    <property type="match status" value="1"/>
</dbReference>
<dbReference type="PANTHER" id="PTHR18968:SF9">
    <property type="entry name" value="3D-(3,5_4)-TRIHYDROXYCYCLOHEXANE-1,2-DIONE HYDROLASE"/>
    <property type="match status" value="1"/>
</dbReference>
<dbReference type="PANTHER" id="PTHR18968">
    <property type="entry name" value="THIAMINE PYROPHOSPHATE ENZYMES"/>
    <property type="match status" value="1"/>
</dbReference>
<dbReference type="Pfam" id="PF02775">
    <property type="entry name" value="TPP_enzyme_C"/>
    <property type="match status" value="1"/>
</dbReference>
<dbReference type="Pfam" id="PF00205">
    <property type="entry name" value="TPP_enzyme_M"/>
    <property type="match status" value="1"/>
</dbReference>
<dbReference type="Pfam" id="PF02776">
    <property type="entry name" value="TPP_enzyme_N"/>
    <property type="match status" value="1"/>
</dbReference>
<dbReference type="SUPFAM" id="SSF52467">
    <property type="entry name" value="DHS-like NAD/FAD-binding domain"/>
    <property type="match status" value="1"/>
</dbReference>
<dbReference type="SUPFAM" id="SSF52518">
    <property type="entry name" value="Thiamin diphosphate-binding fold (THDP-binding)"/>
    <property type="match status" value="2"/>
</dbReference>
<dbReference type="PROSITE" id="PS00187">
    <property type="entry name" value="TPP_ENZYMES"/>
    <property type="match status" value="1"/>
</dbReference>
<name>IOLD_CLOPE</name>
<sequence>MRMTTGQALVKFLDNQYVSFDGKEEKFVDGIFTIFGHGIVVGLGEALYENPGELKVYQGRNEQGMAHVSTAFAKQNNRRKIIACSSSVGPGAANMVTAAATATVNNIPLLLLPGDSFATRQPDPVLQQIEQSYNLGITTNDAFKPVCKYWDRINRPEQLMSAMINAMRVLTDPAETGAVCIALPQDVQGEAYDFPEYFFKKRVHRITRPLAVQEEFEEALDIIMNKKKPIIICGGGVRYSEAGEALVDFAEEFNIPICETQAGKSAIKSSHPLNLGGIGVTGNLAANMIAKDTDLVIGVGTRFSDFTTSSKSLFKNPEVDFITVNVSKFHGGKMDAHKIIGDAKVCIEELQAMLEANNYESSYEDEIVNAKKAWKEEMKRLTNIKYDENFEALIKPKREGCIEEFSVLTGGLITQTAALGVIRETIDDDAIVVGAAGSLPGDLQRMWETDARDSYHMEYGYSCMGYEIAATLGAKLAEPEREVYSMVGDGSYLMLHSEMVTAMQEQKKINILLFDNCGFGCINNLQMSNGIGSLATEFRYRDENGKLEGGLIPIDFAKVASGYGLKTYSVKTLAQLKEALEDAKKQKVSTLIDIKVLPKTMTDGYDAWWHVGIAGESEIDGVNKAFENKEKNLKAARRY</sequence>
<organism>
    <name type="scientific">Clostridium perfringens (strain 13 / Type A)</name>
    <dbReference type="NCBI Taxonomy" id="195102"/>
    <lineage>
        <taxon>Bacteria</taxon>
        <taxon>Bacillati</taxon>
        <taxon>Bacillota</taxon>
        <taxon>Clostridia</taxon>
        <taxon>Eubacteriales</taxon>
        <taxon>Clostridiaceae</taxon>
        <taxon>Clostridium</taxon>
    </lineage>
</organism>
<keyword id="KW-0378">Hydrolase</keyword>
<keyword id="KW-0460">Magnesium</keyword>
<keyword id="KW-0479">Metal-binding</keyword>
<keyword id="KW-0520">NAD</keyword>
<keyword id="KW-1185">Reference proteome</keyword>
<keyword id="KW-0786">Thiamine pyrophosphate</keyword>
<protein>
    <recommendedName>
        <fullName evidence="1">3D-(3,5/4)-trihydroxycyclohexane-1,2-dione hydrolase</fullName>
        <shortName evidence="1">THcHDO hydrolase</shortName>
        <ecNumber evidence="1">3.7.1.22</ecNumber>
    </recommendedName>
</protein>